<accession>A9BAY8</accession>
<evidence type="ECO:0000255" key="1">
    <source>
        <dbReference type="HAMAP-Rule" id="MF_00218"/>
    </source>
</evidence>
<feature type="chain" id="PRO_1000100007" description="Uroporphyrinogen decarboxylase">
    <location>
        <begin position="1"/>
        <end position="351"/>
    </location>
</feature>
<feature type="binding site" evidence="1">
    <location>
        <begin position="26"/>
        <end position="30"/>
    </location>
    <ligand>
        <name>substrate</name>
    </ligand>
</feature>
<feature type="binding site" evidence="1">
    <location>
        <position position="76"/>
    </location>
    <ligand>
        <name>substrate</name>
    </ligand>
</feature>
<feature type="binding site" evidence="1">
    <location>
        <position position="153"/>
    </location>
    <ligand>
        <name>substrate</name>
    </ligand>
</feature>
<feature type="binding site" evidence="1">
    <location>
        <position position="208"/>
    </location>
    <ligand>
        <name>substrate</name>
    </ligand>
</feature>
<feature type="binding site" evidence="1">
    <location>
        <position position="323"/>
    </location>
    <ligand>
        <name>substrate</name>
    </ligand>
</feature>
<feature type="site" description="Transition state stabilizer" evidence="1">
    <location>
        <position position="76"/>
    </location>
</feature>
<organism>
    <name type="scientific">Prochlorococcus marinus (strain MIT 9211)</name>
    <dbReference type="NCBI Taxonomy" id="93059"/>
    <lineage>
        <taxon>Bacteria</taxon>
        <taxon>Bacillati</taxon>
        <taxon>Cyanobacteriota</taxon>
        <taxon>Cyanophyceae</taxon>
        <taxon>Synechococcales</taxon>
        <taxon>Prochlorococcaceae</taxon>
        <taxon>Prochlorococcus</taxon>
    </lineage>
</organism>
<reference key="1">
    <citation type="journal article" date="2007" name="PLoS Genet.">
        <title>Patterns and implications of gene gain and loss in the evolution of Prochlorococcus.</title>
        <authorList>
            <person name="Kettler G.C."/>
            <person name="Martiny A.C."/>
            <person name="Huang K."/>
            <person name="Zucker J."/>
            <person name="Coleman M.L."/>
            <person name="Rodrigue S."/>
            <person name="Chen F."/>
            <person name="Lapidus A."/>
            <person name="Ferriera S."/>
            <person name="Johnson J."/>
            <person name="Steglich C."/>
            <person name="Church G.M."/>
            <person name="Richardson P."/>
            <person name="Chisholm S.W."/>
        </authorList>
    </citation>
    <scope>NUCLEOTIDE SEQUENCE [LARGE SCALE GENOMIC DNA]</scope>
    <source>
        <strain>MIT 9211</strain>
    </source>
</reference>
<keyword id="KW-0963">Cytoplasm</keyword>
<keyword id="KW-0210">Decarboxylase</keyword>
<keyword id="KW-0456">Lyase</keyword>
<keyword id="KW-0627">Porphyrin biosynthesis</keyword>
<keyword id="KW-1185">Reference proteome</keyword>
<name>DCUP_PROM4</name>
<comment type="function">
    <text evidence="1">Catalyzes the decarboxylation of four acetate groups of uroporphyrinogen-III to yield coproporphyrinogen-III.</text>
</comment>
<comment type="catalytic activity">
    <reaction evidence="1">
        <text>uroporphyrinogen III + 4 H(+) = coproporphyrinogen III + 4 CO2</text>
        <dbReference type="Rhea" id="RHEA:19865"/>
        <dbReference type="ChEBI" id="CHEBI:15378"/>
        <dbReference type="ChEBI" id="CHEBI:16526"/>
        <dbReference type="ChEBI" id="CHEBI:57308"/>
        <dbReference type="ChEBI" id="CHEBI:57309"/>
        <dbReference type="EC" id="4.1.1.37"/>
    </reaction>
</comment>
<comment type="pathway">
    <text evidence="1">Porphyrin-containing compound metabolism; protoporphyrin-IX biosynthesis; coproporphyrinogen-III from 5-aminolevulinate: step 4/4.</text>
</comment>
<comment type="subunit">
    <text evidence="1">Homodimer.</text>
</comment>
<comment type="subcellular location">
    <subcellularLocation>
        <location evidence="1">Cytoplasm</location>
    </subcellularLocation>
</comment>
<comment type="similarity">
    <text evidence="1">Belongs to the uroporphyrinogen decarboxylase family.</text>
</comment>
<gene>
    <name evidence="1" type="primary">hemE</name>
    <name type="ordered locus">P9211_10691</name>
</gene>
<dbReference type="EC" id="4.1.1.37" evidence="1"/>
<dbReference type="EMBL" id="CP000878">
    <property type="protein sequence ID" value="ABX09000.1"/>
    <property type="molecule type" value="Genomic_DNA"/>
</dbReference>
<dbReference type="RefSeq" id="WP_012195621.1">
    <property type="nucleotide sequence ID" value="NC_009976.1"/>
</dbReference>
<dbReference type="SMR" id="A9BAY8"/>
<dbReference type="STRING" id="93059.P9211_10691"/>
<dbReference type="KEGG" id="pmj:P9211_10691"/>
<dbReference type="eggNOG" id="COG0407">
    <property type="taxonomic scope" value="Bacteria"/>
</dbReference>
<dbReference type="HOGENOM" id="CLU_040933_0_2_3"/>
<dbReference type="OrthoDB" id="9806656at2"/>
<dbReference type="UniPathway" id="UPA00251">
    <property type="reaction ID" value="UER00321"/>
</dbReference>
<dbReference type="Proteomes" id="UP000000788">
    <property type="component" value="Chromosome"/>
</dbReference>
<dbReference type="GO" id="GO:0005737">
    <property type="term" value="C:cytoplasm"/>
    <property type="evidence" value="ECO:0007669"/>
    <property type="project" value="UniProtKB-SubCell"/>
</dbReference>
<dbReference type="GO" id="GO:0004853">
    <property type="term" value="F:uroporphyrinogen decarboxylase activity"/>
    <property type="evidence" value="ECO:0007669"/>
    <property type="project" value="UniProtKB-UniRule"/>
</dbReference>
<dbReference type="GO" id="GO:0006782">
    <property type="term" value="P:protoporphyrinogen IX biosynthetic process"/>
    <property type="evidence" value="ECO:0007669"/>
    <property type="project" value="UniProtKB-UniRule"/>
</dbReference>
<dbReference type="CDD" id="cd00717">
    <property type="entry name" value="URO-D"/>
    <property type="match status" value="1"/>
</dbReference>
<dbReference type="FunFam" id="3.20.20.210:FF:000006">
    <property type="entry name" value="Uroporphyrinogen decarboxylase"/>
    <property type="match status" value="1"/>
</dbReference>
<dbReference type="Gene3D" id="3.20.20.210">
    <property type="match status" value="1"/>
</dbReference>
<dbReference type="HAMAP" id="MF_00218">
    <property type="entry name" value="URO_D"/>
    <property type="match status" value="1"/>
</dbReference>
<dbReference type="InterPro" id="IPR038071">
    <property type="entry name" value="UROD/MetE-like_sf"/>
</dbReference>
<dbReference type="InterPro" id="IPR006361">
    <property type="entry name" value="Uroporphyrinogen_deCO2ase_HemE"/>
</dbReference>
<dbReference type="InterPro" id="IPR000257">
    <property type="entry name" value="Uroporphyrinogen_deCOase"/>
</dbReference>
<dbReference type="NCBIfam" id="TIGR01464">
    <property type="entry name" value="hemE"/>
    <property type="match status" value="1"/>
</dbReference>
<dbReference type="PANTHER" id="PTHR21091">
    <property type="entry name" value="METHYLTETRAHYDROFOLATE:HOMOCYSTEINE METHYLTRANSFERASE RELATED"/>
    <property type="match status" value="1"/>
</dbReference>
<dbReference type="PANTHER" id="PTHR21091:SF169">
    <property type="entry name" value="UROPORPHYRINOGEN DECARBOXYLASE"/>
    <property type="match status" value="1"/>
</dbReference>
<dbReference type="Pfam" id="PF01208">
    <property type="entry name" value="URO-D"/>
    <property type="match status" value="1"/>
</dbReference>
<dbReference type="SUPFAM" id="SSF51726">
    <property type="entry name" value="UROD/MetE-like"/>
    <property type="match status" value="1"/>
</dbReference>
<dbReference type="PROSITE" id="PS00906">
    <property type="entry name" value="UROD_1"/>
    <property type="match status" value="1"/>
</dbReference>
<dbReference type="PROSITE" id="PS00907">
    <property type="entry name" value="UROD_2"/>
    <property type="match status" value="1"/>
</dbReference>
<sequence length="351" mass="38969">MTQSVPLLLRAARGENVDRPPVWMMRQAGRYMKVYRDLRDKYPSFRERSENPDLSYEISMQPFRAFKPDGVILFSDILTPLPGMGIDFDIVESKGPLIKDPIRNESQIKTLRALSPSESCPFVGEVLKRLRDSVGNEAAVLGFVGAPWTLAAYVVEGKSSKNYAVIKAMAFQEPELLHKLLDHFADSIANYLCYQIDSGAQVVQMFDSWAGQLSPIDYETFAAPYQKKVIDLVKKTHPETPMILYISGSAGVLERMGRTGVDIVSLDWTVDMAEGCARLPQNVGIQGNVDPGLLFGSPESIRARIIDTVKKAKGRKFILNLGHGILPGTPEENARVFFEAGKSVNELISQT</sequence>
<proteinExistence type="inferred from homology"/>
<protein>
    <recommendedName>
        <fullName evidence="1">Uroporphyrinogen decarboxylase</fullName>
        <shortName evidence="1">UPD</shortName>
        <shortName evidence="1">URO-D</shortName>
        <ecNumber evidence="1">4.1.1.37</ecNumber>
    </recommendedName>
</protein>